<comment type="subcellular location">
    <subcellularLocation>
        <location evidence="2">Cell membrane</location>
        <topology evidence="2">Multi-pass membrane protein</topology>
    </subcellularLocation>
</comment>
<comment type="similarity">
    <text evidence="2">Belongs to the monovalent cation:proton antiporter 1 (CPA1) transporter (TC 2.A.36) family.</text>
</comment>
<accession>P9WJI2</accession>
<accession>L0T963</accession>
<accession>P65526</accession>
<accession>Q50678</accession>
<reference key="1">
    <citation type="journal article" date="2002" name="J. Bacteriol.">
        <title>Whole-genome comparison of Mycobacterium tuberculosis clinical and laboratory strains.</title>
        <authorList>
            <person name="Fleischmann R.D."/>
            <person name="Alland D."/>
            <person name="Eisen J.A."/>
            <person name="Carpenter L."/>
            <person name="White O."/>
            <person name="Peterson J.D."/>
            <person name="DeBoy R.T."/>
            <person name="Dodson R.J."/>
            <person name="Gwinn M.L."/>
            <person name="Haft D.H."/>
            <person name="Hickey E.K."/>
            <person name="Kolonay J.F."/>
            <person name="Nelson W.C."/>
            <person name="Umayam L.A."/>
            <person name="Ermolaeva M.D."/>
            <person name="Salzberg S.L."/>
            <person name="Delcher A."/>
            <person name="Utterback T.R."/>
            <person name="Weidman J.F."/>
            <person name="Khouri H.M."/>
            <person name="Gill J."/>
            <person name="Mikula A."/>
            <person name="Bishai W."/>
            <person name="Jacobs W.R. Jr."/>
            <person name="Venter J.C."/>
            <person name="Fraser C.M."/>
        </authorList>
    </citation>
    <scope>NUCLEOTIDE SEQUENCE [LARGE SCALE GENOMIC DNA]</scope>
    <source>
        <strain>CDC 1551 / Oshkosh</strain>
    </source>
</reference>
<sequence>MNGRRTIGEDGLVFGLVVIVALVAAVVVGTVLGHRYRVGPPVLLILSGSLLGLIPRFGDVQIDGEVVLLLFLPAILYWESMNTSFREIRWNLRVIVMFSIGLVIATAVAVSWTARALGMESHAAAVLGAVLSPTDAAAVAGLAKRLPRRALTVLRGESLINDGTALVLFAVTVAVAEGAAGIGPAALVGRFVVSYLGGIMAGLLVGGLVTLLRRRIDAPLEEGALSLLTPFAAFLLAQSLKCSGVVAVLVSALVLTYVGPTVIRARSRLQAHAFWDIATFLINGSLWVFVGVQIPGAIDHIAGEDGGLPRATVLALAVTGVVIATRIAWVQATTVLGHTVDRVLKKPTRHVGFRQRCVTSWAGFRGAVSLAAALAVPMTTNSGAPFPDRNLIIFVVSVVILVTVLVQGTSLPTVVRWARMPEDVAHANELQLARTRSAQAALDALPTVADELGVAPDLVKHLEKEYEERAVLVMADGADSATSDLAERNDLVRRVRLGVLQHQRQAVTTLRNQNLIDDIVLRELQAAMDLEEVQLLDPADAE</sequence>
<evidence type="ECO:0000255" key="1"/>
<evidence type="ECO:0000305" key="2"/>
<organism>
    <name type="scientific">Mycobacterium tuberculosis (strain CDC 1551 / Oshkosh)</name>
    <dbReference type="NCBI Taxonomy" id="83331"/>
    <lineage>
        <taxon>Bacteria</taxon>
        <taxon>Bacillati</taxon>
        <taxon>Actinomycetota</taxon>
        <taxon>Actinomycetes</taxon>
        <taxon>Mycobacteriales</taxon>
        <taxon>Mycobacteriaceae</taxon>
        <taxon>Mycobacterium</taxon>
        <taxon>Mycobacterium tuberculosis complex</taxon>
    </lineage>
</organism>
<dbReference type="EMBL" id="AE000516">
    <property type="protein sequence ID" value="AAK46629.1"/>
    <property type="molecule type" value="Genomic_DNA"/>
</dbReference>
<dbReference type="PIR" id="C70732">
    <property type="entry name" value="C70732"/>
</dbReference>
<dbReference type="SMR" id="P9WJI2"/>
<dbReference type="KEGG" id="mtc:MT2345"/>
<dbReference type="PATRIC" id="fig|83331.31.peg.2524"/>
<dbReference type="HOGENOM" id="CLU_005912_8_2_11"/>
<dbReference type="Proteomes" id="UP000001020">
    <property type="component" value="Chromosome"/>
</dbReference>
<dbReference type="GO" id="GO:0005886">
    <property type="term" value="C:plasma membrane"/>
    <property type="evidence" value="ECO:0007669"/>
    <property type="project" value="UniProtKB-SubCell"/>
</dbReference>
<dbReference type="GO" id="GO:0015386">
    <property type="term" value="F:potassium:proton antiporter activity"/>
    <property type="evidence" value="ECO:0007669"/>
    <property type="project" value="TreeGrafter"/>
</dbReference>
<dbReference type="GO" id="GO:0015385">
    <property type="term" value="F:sodium:proton antiporter activity"/>
    <property type="evidence" value="ECO:0007669"/>
    <property type="project" value="InterPro"/>
</dbReference>
<dbReference type="GO" id="GO:0051453">
    <property type="term" value="P:regulation of intracellular pH"/>
    <property type="evidence" value="ECO:0007669"/>
    <property type="project" value="TreeGrafter"/>
</dbReference>
<dbReference type="GO" id="GO:0098719">
    <property type="term" value="P:sodium ion import across plasma membrane"/>
    <property type="evidence" value="ECO:0007669"/>
    <property type="project" value="TreeGrafter"/>
</dbReference>
<dbReference type="Gene3D" id="6.10.140.1330">
    <property type="match status" value="1"/>
</dbReference>
<dbReference type="InterPro" id="IPR018422">
    <property type="entry name" value="Cation/H_exchanger_CPA1"/>
</dbReference>
<dbReference type="InterPro" id="IPR004705">
    <property type="entry name" value="Cation/H_exchanger_CPA1_bac"/>
</dbReference>
<dbReference type="InterPro" id="IPR006153">
    <property type="entry name" value="Cation/H_exchanger_TM"/>
</dbReference>
<dbReference type="NCBIfam" id="TIGR00831">
    <property type="entry name" value="a_cpa1"/>
    <property type="match status" value="1"/>
</dbReference>
<dbReference type="PANTHER" id="PTHR10110">
    <property type="entry name" value="SODIUM/HYDROGEN EXCHANGER"/>
    <property type="match status" value="1"/>
</dbReference>
<dbReference type="PANTHER" id="PTHR10110:SF86">
    <property type="entry name" value="SODIUM_HYDROGEN EXCHANGER 7"/>
    <property type="match status" value="1"/>
</dbReference>
<dbReference type="Pfam" id="PF00999">
    <property type="entry name" value="Na_H_Exchanger"/>
    <property type="match status" value="1"/>
</dbReference>
<proteinExistence type="inferred from homology"/>
<name>Y2287_MYCTO</name>
<gene>
    <name type="ordered locus">MT2345</name>
</gene>
<protein>
    <recommendedName>
        <fullName>Uncharacterized Na(+)/H(+) exchanger MT2345</fullName>
    </recommendedName>
</protein>
<keyword id="KW-0050">Antiport</keyword>
<keyword id="KW-1003">Cell membrane</keyword>
<keyword id="KW-0406">Ion transport</keyword>
<keyword id="KW-0472">Membrane</keyword>
<keyword id="KW-1185">Reference proteome</keyword>
<keyword id="KW-0915">Sodium</keyword>
<keyword id="KW-0739">Sodium transport</keyword>
<keyword id="KW-0812">Transmembrane</keyword>
<keyword id="KW-1133">Transmembrane helix</keyword>
<keyword id="KW-0813">Transport</keyword>
<feature type="chain" id="PRO_0000427825" description="Uncharacterized Na(+)/H(+) exchanger MT2345">
    <location>
        <begin position="1"/>
        <end position="542"/>
    </location>
</feature>
<feature type="transmembrane region" description="Helical" evidence="1">
    <location>
        <begin position="12"/>
        <end position="32"/>
    </location>
</feature>
<feature type="transmembrane region" description="Helical" evidence="1">
    <location>
        <begin position="57"/>
        <end position="77"/>
    </location>
</feature>
<feature type="transmembrane region" description="Helical" evidence="1">
    <location>
        <begin position="94"/>
        <end position="114"/>
    </location>
</feature>
<feature type="transmembrane region" description="Helical" evidence="1">
    <location>
        <begin position="123"/>
        <end position="143"/>
    </location>
</feature>
<feature type="transmembrane region" description="Helical" evidence="1">
    <location>
        <begin position="168"/>
        <end position="188"/>
    </location>
</feature>
<feature type="transmembrane region" description="Helical" evidence="1">
    <location>
        <begin position="191"/>
        <end position="211"/>
    </location>
</feature>
<feature type="transmembrane region" description="Helical" evidence="1">
    <location>
        <begin position="216"/>
        <end position="236"/>
    </location>
</feature>
<feature type="transmembrane region" description="Helical" evidence="1">
    <location>
        <begin position="243"/>
        <end position="263"/>
    </location>
</feature>
<feature type="transmembrane region" description="Helical" evidence="1">
    <location>
        <begin position="277"/>
        <end position="297"/>
    </location>
</feature>
<feature type="transmembrane region" description="Helical" evidence="1">
    <location>
        <begin position="313"/>
        <end position="333"/>
    </location>
</feature>
<feature type="transmembrane region" description="Helical" evidence="1">
    <location>
        <begin position="358"/>
        <end position="378"/>
    </location>
</feature>
<feature type="transmembrane region" description="Helical" evidence="1">
    <location>
        <begin position="391"/>
        <end position="411"/>
    </location>
</feature>